<feature type="chain" id="PRO_0000164532" description="D-aminoacyl-tRNA deacylase">
    <location>
        <begin position="1"/>
        <end position="149"/>
    </location>
</feature>
<feature type="short sequence motif" description="Gly-cisPro motif, important for rejection of L-amino acids" evidence="1">
    <location>
        <begin position="137"/>
        <end position="138"/>
    </location>
</feature>
<accession>Q892A9</accession>
<reference key="1">
    <citation type="journal article" date="2003" name="Proc. Natl. Acad. Sci. U.S.A.">
        <title>The genome sequence of Clostridium tetani, the causative agent of tetanus disease.</title>
        <authorList>
            <person name="Brueggemann H."/>
            <person name="Baeumer S."/>
            <person name="Fricke W.F."/>
            <person name="Wiezer A."/>
            <person name="Liesegang H."/>
            <person name="Decker I."/>
            <person name="Herzberg C."/>
            <person name="Martinez-Arias R."/>
            <person name="Merkl R."/>
            <person name="Henne A."/>
            <person name="Gottschalk G."/>
        </authorList>
    </citation>
    <scope>NUCLEOTIDE SEQUENCE [LARGE SCALE GENOMIC DNA]</scope>
    <source>
        <strain>Massachusetts / E88</strain>
    </source>
</reference>
<proteinExistence type="inferred from homology"/>
<name>DTD_CLOTE</name>
<keyword id="KW-0963">Cytoplasm</keyword>
<keyword id="KW-0378">Hydrolase</keyword>
<keyword id="KW-1185">Reference proteome</keyword>
<keyword id="KW-0694">RNA-binding</keyword>
<keyword id="KW-0820">tRNA-binding</keyword>
<sequence>MRVVVQRVKSSKVEVDGKIIGSIKGGLNVLLGICKGDTQKDIEYLVDKILGLRIFEDECGKMNKSLLDVKGELLVISQFTLYGDCRKGKRPSFIEALGGEEAKKLYEEFIKKCKEVLGEVQMGEFGADMLVSIENDGPVTLMIDSKKVF</sequence>
<dbReference type="EC" id="3.1.1.96" evidence="1"/>
<dbReference type="EMBL" id="AE015927">
    <property type="protein sequence ID" value="AAO36686.1"/>
    <property type="molecule type" value="Genomic_DNA"/>
</dbReference>
<dbReference type="RefSeq" id="WP_011100347.1">
    <property type="nucleotide sequence ID" value="NC_004557.1"/>
</dbReference>
<dbReference type="SMR" id="Q892A9"/>
<dbReference type="STRING" id="212717.CTC_02197"/>
<dbReference type="GeneID" id="24253824"/>
<dbReference type="KEGG" id="ctc:CTC_02197"/>
<dbReference type="HOGENOM" id="CLU_076901_1_0_9"/>
<dbReference type="OrthoDB" id="9801395at2"/>
<dbReference type="Proteomes" id="UP000001412">
    <property type="component" value="Chromosome"/>
</dbReference>
<dbReference type="GO" id="GO:0005737">
    <property type="term" value="C:cytoplasm"/>
    <property type="evidence" value="ECO:0007669"/>
    <property type="project" value="UniProtKB-SubCell"/>
</dbReference>
<dbReference type="GO" id="GO:0051500">
    <property type="term" value="F:D-tyrosyl-tRNA(Tyr) deacylase activity"/>
    <property type="evidence" value="ECO:0007669"/>
    <property type="project" value="TreeGrafter"/>
</dbReference>
<dbReference type="GO" id="GO:0106026">
    <property type="term" value="F:Gly-tRNA(Ala) deacylase activity"/>
    <property type="evidence" value="ECO:0007669"/>
    <property type="project" value="UniProtKB-UniRule"/>
</dbReference>
<dbReference type="GO" id="GO:0043908">
    <property type="term" value="F:Ser(Gly)-tRNA(Ala) hydrolase activity"/>
    <property type="evidence" value="ECO:0007669"/>
    <property type="project" value="UniProtKB-UniRule"/>
</dbReference>
<dbReference type="GO" id="GO:0000049">
    <property type="term" value="F:tRNA binding"/>
    <property type="evidence" value="ECO:0007669"/>
    <property type="project" value="UniProtKB-UniRule"/>
</dbReference>
<dbReference type="GO" id="GO:0019478">
    <property type="term" value="P:D-amino acid catabolic process"/>
    <property type="evidence" value="ECO:0007669"/>
    <property type="project" value="UniProtKB-UniRule"/>
</dbReference>
<dbReference type="CDD" id="cd00563">
    <property type="entry name" value="Dtyr_deacylase"/>
    <property type="match status" value="1"/>
</dbReference>
<dbReference type="FunFam" id="3.50.80.10:FF:000001">
    <property type="entry name" value="D-aminoacyl-tRNA deacylase"/>
    <property type="match status" value="1"/>
</dbReference>
<dbReference type="Gene3D" id="3.50.80.10">
    <property type="entry name" value="D-tyrosyl-tRNA(Tyr) deacylase"/>
    <property type="match status" value="1"/>
</dbReference>
<dbReference type="HAMAP" id="MF_00518">
    <property type="entry name" value="Deacylase_Dtd"/>
    <property type="match status" value="1"/>
</dbReference>
<dbReference type="InterPro" id="IPR003732">
    <property type="entry name" value="Daa-tRNA_deacyls_DTD"/>
</dbReference>
<dbReference type="InterPro" id="IPR023509">
    <property type="entry name" value="DTD-like_sf"/>
</dbReference>
<dbReference type="NCBIfam" id="TIGR00256">
    <property type="entry name" value="D-aminoacyl-tRNA deacylase"/>
    <property type="match status" value="1"/>
</dbReference>
<dbReference type="PANTHER" id="PTHR10472:SF5">
    <property type="entry name" value="D-AMINOACYL-TRNA DEACYLASE 1"/>
    <property type="match status" value="1"/>
</dbReference>
<dbReference type="PANTHER" id="PTHR10472">
    <property type="entry name" value="D-TYROSYL-TRNA TYR DEACYLASE"/>
    <property type="match status" value="1"/>
</dbReference>
<dbReference type="Pfam" id="PF02580">
    <property type="entry name" value="Tyr_Deacylase"/>
    <property type="match status" value="1"/>
</dbReference>
<dbReference type="SUPFAM" id="SSF69500">
    <property type="entry name" value="DTD-like"/>
    <property type="match status" value="1"/>
</dbReference>
<evidence type="ECO:0000255" key="1">
    <source>
        <dbReference type="HAMAP-Rule" id="MF_00518"/>
    </source>
</evidence>
<comment type="function">
    <text evidence="1">An aminoacyl-tRNA editing enzyme that deacylates mischarged D-aminoacyl-tRNAs. Also deacylates mischarged glycyl-tRNA(Ala), protecting cells against glycine mischarging by AlaRS. Acts via tRNA-based rather than protein-based catalysis; rejects L-amino acids rather than detecting D-amino acids in the active site. By recycling D-aminoacyl-tRNA to D-amino acids and free tRNA molecules, this enzyme counteracts the toxicity associated with the formation of D-aminoacyl-tRNA entities in vivo and helps enforce protein L-homochirality.</text>
</comment>
<comment type="catalytic activity">
    <reaction evidence="1">
        <text>glycyl-tRNA(Ala) + H2O = tRNA(Ala) + glycine + H(+)</text>
        <dbReference type="Rhea" id="RHEA:53744"/>
        <dbReference type="Rhea" id="RHEA-COMP:9657"/>
        <dbReference type="Rhea" id="RHEA-COMP:13640"/>
        <dbReference type="ChEBI" id="CHEBI:15377"/>
        <dbReference type="ChEBI" id="CHEBI:15378"/>
        <dbReference type="ChEBI" id="CHEBI:57305"/>
        <dbReference type="ChEBI" id="CHEBI:78442"/>
        <dbReference type="ChEBI" id="CHEBI:78522"/>
        <dbReference type="EC" id="3.1.1.96"/>
    </reaction>
</comment>
<comment type="catalytic activity">
    <reaction evidence="1">
        <text>a D-aminoacyl-tRNA + H2O = a tRNA + a D-alpha-amino acid + H(+)</text>
        <dbReference type="Rhea" id="RHEA:13953"/>
        <dbReference type="Rhea" id="RHEA-COMP:10123"/>
        <dbReference type="Rhea" id="RHEA-COMP:10124"/>
        <dbReference type="ChEBI" id="CHEBI:15377"/>
        <dbReference type="ChEBI" id="CHEBI:15378"/>
        <dbReference type="ChEBI" id="CHEBI:59871"/>
        <dbReference type="ChEBI" id="CHEBI:78442"/>
        <dbReference type="ChEBI" id="CHEBI:79333"/>
        <dbReference type="EC" id="3.1.1.96"/>
    </reaction>
</comment>
<comment type="subunit">
    <text evidence="1">Homodimer.</text>
</comment>
<comment type="subcellular location">
    <subcellularLocation>
        <location evidence="1">Cytoplasm</location>
    </subcellularLocation>
</comment>
<comment type="domain">
    <text evidence="1">A Gly-cisPro motif from one monomer fits into the active site of the other monomer to allow specific chiral rejection of L-amino acids.</text>
</comment>
<comment type="similarity">
    <text evidence="1">Belongs to the DTD family.</text>
</comment>
<organism>
    <name type="scientific">Clostridium tetani (strain Massachusetts / E88)</name>
    <dbReference type="NCBI Taxonomy" id="212717"/>
    <lineage>
        <taxon>Bacteria</taxon>
        <taxon>Bacillati</taxon>
        <taxon>Bacillota</taxon>
        <taxon>Clostridia</taxon>
        <taxon>Eubacteriales</taxon>
        <taxon>Clostridiaceae</taxon>
        <taxon>Clostridium</taxon>
    </lineage>
</organism>
<gene>
    <name evidence="1" type="primary">dtd</name>
    <name type="ordered locus">CTC_02197</name>
</gene>
<protein>
    <recommendedName>
        <fullName evidence="1">D-aminoacyl-tRNA deacylase</fullName>
        <shortName evidence="1">DTD</shortName>
        <ecNumber evidence="1">3.1.1.96</ecNumber>
    </recommendedName>
    <alternativeName>
        <fullName evidence="1">Gly-tRNA(Ala) deacylase</fullName>
    </alternativeName>
</protein>